<feature type="chain" id="PRO_1000017260" description="5-methyltetrahydropteroyltriglutamate--homocysteine methyltransferase">
    <location>
        <begin position="1"/>
        <end position="771"/>
    </location>
</feature>
<feature type="active site" description="Proton donor" evidence="1">
    <location>
        <position position="714"/>
    </location>
</feature>
<feature type="binding site" evidence="1">
    <location>
        <begin position="13"/>
        <end position="16"/>
    </location>
    <ligand>
        <name>5-methyltetrahydropteroyltri-L-glutamate</name>
        <dbReference type="ChEBI" id="CHEBI:58207"/>
    </ligand>
</feature>
<feature type="binding site" evidence="1">
    <location>
        <position position="128"/>
    </location>
    <ligand>
        <name>5-methyltetrahydropteroyltri-L-glutamate</name>
        <dbReference type="ChEBI" id="CHEBI:58207"/>
    </ligand>
</feature>
<feature type="binding site" evidence="1">
    <location>
        <begin position="451"/>
        <end position="453"/>
    </location>
    <ligand>
        <name>L-homocysteine</name>
        <dbReference type="ChEBI" id="CHEBI:58199"/>
    </ligand>
</feature>
<feature type="binding site" evidence="1">
    <location>
        <begin position="451"/>
        <end position="453"/>
    </location>
    <ligand>
        <name>L-methionine</name>
        <dbReference type="ChEBI" id="CHEBI:57844"/>
    </ligand>
</feature>
<feature type="binding site" evidence="1">
    <location>
        <position position="504"/>
    </location>
    <ligand>
        <name>L-homocysteine</name>
        <dbReference type="ChEBI" id="CHEBI:58199"/>
    </ligand>
</feature>
<feature type="binding site" evidence="1">
    <location>
        <position position="504"/>
    </location>
    <ligand>
        <name>L-methionine</name>
        <dbReference type="ChEBI" id="CHEBI:57844"/>
    </ligand>
</feature>
<feature type="binding site" evidence="1">
    <location>
        <begin position="535"/>
        <end position="536"/>
    </location>
    <ligand>
        <name>5-methyltetrahydropteroyltri-L-glutamate</name>
        <dbReference type="ChEBI" id="CHEBI:58207"/>
    </ligand>
</feature>
<feature type="binding site" evidence="1">
    <location>
        <position position="581"/>
    </location>
    <ligand>
        <name>5-methyltetrahydropteroyltri-L-glutamate</name>
        <dbReference type="ChEBI" id="CHEBI:58207"/>
    </ligand>
</feature>
<feature type="binding site" evidence="1">
    <location>
        <position position="619"/>
    </location>
    <ligand>
        <name>L-homocysteine</name>
        <dbReference type="ChEBI" id="CHEBI:58199"/>
    </ligand>
</feature>
<feature type="binding site" evidence="1">
    <location>
        <position position="619"/>
    </location>
    <ligand>
        <name>L-methionine</name>
        <dbReference type="ChEBI" id="CHEBI:57844"/>
    </ligand>
</feature>
<feature type="binding site" evidence="1">
    <location>
        <position position="625"/>
    </location>
    <ligand>
        <name>5-methyltetrahydropteroyltri-L-glutamate</name>
        <dbReference type="ChEBI" id="CHEBI:58207"/>
    </ligand>
</feature>
<feature type="binding site" evidence="1">
    <location>
        <position position="661"/>
    </location>
    <ligand>
        <name>Zn(2+)</name>
        <dbReference type="ChEBI" id="CHEBI:29105"/>
        <note>catalytic</note>
    </ligand>
</feature>
<feature type="binding site" evidence="1">
    <location>
        <position position="663"/>
    </location>
    <ligand>
        <name>Zn(2+)</name>
        <dbReference type="ChEBI" id="CHEBI:29105"/>
        <note>catalytic</note>
    </ligand>
</feature>
<feature type="binding site" evidence="1">
    <location>
        <position position="685"/>
    </location>
    <ligand>
        <name>Zn(2+)</name>
        <dbReference type="ChEBI" id="CHEBI:29105"/>
        <note>catalytic</note>
    </ligand>
</feature>
<feature type="binding site" evidence="1">
    <location>
        <position position="746"/>
    </location>
    <ligand>
        <name>Zn(2+)</name>
        <dbReference type="ChEBI" id="CHEBI:29105"/>
        <note>catalytic</note>
    </ligand>
</feature>
<organism>
    <name type="scientific">Nitrobacter winogradskyi (strain ATCC 25391 / DSM 10237 / CIP 104748 / NCIMB 11846 / Nb-255)</name>
    <dbReference type="NCBI Taxonomy" id="323098"/>
    <lineage>
        <taxon>Bacteria</taxon>
        <taxon>Pseudomonadati</taxon>
        <taxon>Pseudomonadota</taxon>
        <taxon>Alphaproteobacteria</taxon>
        <taxon>Hyphomicrobiales</taxon>
        <taxon>Nitrobacteraceae</taxon>
        <taxon>Nitrobacter</taxon>
    </lineage>
</organism>
<proteinExistence type="inferred from homology"/>
<sequence length="771" mass="85031">MATLGTPRIGPRRELKTALESYWSGKSDESALLEAAAGLRAANWARQKSLGVTVIPSNDFTFYDHVLDTSVMVGAIPDIYGWKSGPVPLATYFAMARGAQGGNDDAACAHGHQGDGHAHGAPAQEMTKWFDTNYHYMVPEFTSGQRFQLSSLKAIDEYREAKALGYQTRPVLLGPVTYLKLGKSKDANLDPLSLLPDLLPVYIDVLKRLAAEGAEWVQIDEPCLVLDLDDATRKVLRAAYEQLADALPKLKVMLTTYFGGLGDNLDAALSLPVTGLHIDLARAPDQLEAVAAKAPHDLILSLGVIDGRNIWRANLPALLDRLEPVVSERGADRVQIAPSCSLLHVPIDVSLETDLDAELKSWLAFSVQKMGELATLGEALAKGRASVADALKASADAAAARKASPKVHDAKVEGRIAAVTSDMARRKSAFAERAKLQRERFGLPPFPTTTIGSFPQTAEVRKARSAHAKGTLSDTDYEKFLQEETARTIRWQEDIGLDVLVHGEFERNDMVQYFGEQLSGFAFTRHGWVQSYGSRCVRPPVLFGDVSRPRPMTVGWWKYAQSLTAKPMKGMLTGPVTILNWSFVRDDVPRSLACRQIALAIRDEVSDLEQAGATMIQIDEAALREGLPLRRSEWKTYLDWAVECFRLCASGVADATQIHTHMCYSEFNDIIDAIASMDADVISIETSRSKMELLDAFKTYKYPNEIGPGVYDIHSPRVPAVDEMTGLLKLARERLSDRQIWINPDCGLKTRKWEEVRPALVNMVEAAKLMR</sequence>
<accession>Q3SNK1</accession>
<gene>
    <name evidence="1" type="primary">metE</name>
    <name type="ordered locus">Nwi_2890</name>
</gene>
<dbReference type="EC" id="2.1.1.14" evidence="1"/>
<dbReference type="EMBL" id="CP000115">
    <property type="protein sequence ID" value="ABA06140.1"/>
    <property type="molecule type" value="Genomic_DNA"/>
</dbReference>
<dbReference type="SMR" id="Q3SNK1"/>
<dbReference type="STRING" id="323098.Nwi_2890"/>
<dbReference type="KEGG" id="nwi:Nwi_2890"/>
<dbReference type="eggNOG" id="COG0620">
    <property type="taxonomic scope" value="Bacteria"/>
</dbReference>
<dbReference type="HOGENOM" id="CLU_013175_0_0_5"/>
<dbReference type="OrthoDB" id="244285at2"/>
<dbReference type="UniPathway" id="UPA00051">
    <property type="reaction ID" value="UER00082"/>
</dbReference>
<dbReference type="Proteomes" id="UP000002531">
    <property type="component" value="Chromosome"/>
</dbReference>
<dbReference type="GO" id="GO:0003871">
    <property type="term" value="F:5-methyltetrahydropteroyltriglutamate-homocysteine S-methyltransferase activity"/>
    <property type="evidence" value="ECO:0007669"/>
    <property type="project" value="UniProtKB-UniRule"/>
</dbReference>
<dbReference type="GO" id="GO:0008270">
    <property type="term" value="F:zinc ion binding"/>
    <property type="evidence" value="ECO:0007669"/>
    <property type="project" value="InterPro"/>
</dbReference>
<dbReference type="GO" id="GO:0009086">
    <property type="term" value="P:methionine biosynthetic process"/>
    <property type="evidence" value="ECO:0007669"/>
    <property type="project" value="UniProtKB-UniRule"/>
</dbReference>
<dbReference type="GO" id="GO:0032259">
    <property type="term" value="P:methylation"/>
    <property type="evidence" value="ECO:0007669"/>
    <property type="project" value="UniProtKB-KW"/>
</dbReference>
<dbReference type="CDD" id="cd03311">
    <property type="entry name" value="CIMS_C_terminal_like"/>
    <property type="match status" value="1"/>
</dbReference>
<dbReference type="CDD" id="cd03312">
    <property type="entry name" value="CIMS_N_terminal_like"/>
    <property type="match status" value="1"/>
</dbReference>
<dbReference type="FunFam" id="3.20.20.210:FF:000002">
    <property type="entry name" value="5-methyltetrahydropteroyltriglutamate--homocysteine methyltransferase"/>
    <property type="match status" value="1"/>
</dbReference>
<dbReference type="FunFam" id="3.20.20.210:FF:000003">
    <property type="entry name" value="5-methyltetrahydropteroyltriglutamate--homocysteine methyltransferase"/>
    <property type="match status" value="1"/>
</dbReference>
<dbReference type="Gene3D" id="3.20.20.210">
    <property type="match status" value="2"/>
</dbReference>
<dbReference type="HAMAP" id="MF_00172">
    <property type="entry name" value="Meth_synth"/>
    <property type="match status" value="1"/>
</dbReference>
<dbReference type="InterPro" id="IPR013215">
    <property type="entry name" value="Cbl-indep_Met_Synth_N"/>
</dbReference>
<dbReference type="InterPro" id="IPR006276">
    <property type="entry name" value="Cobalamin-indep_Met_synthase"/>
</dbReference>
<dbReference type="InterPro" id="IPR002629">
    <property type="entry name" value="Met_Synth_C/arc"/>
</dbReference>
<dbReference type="InterPro" id="IPR038071">
    <property type="entry name" value="UROD/MetE-like_sf"/>
</dbReference>
<dbReference type="NCBIfam" id="TIGR01371">
    <property type="entry name" value="met_syn_B12ind"/>
    <property type="match status" value="1"/>
</dbReference>
<dbReference type="NCBIfam" id="NF003556">
    <property type="entry name" value="PRK05222.1"/>
    <property type="match status" value="1"/>
</dbReference>
<dbReference type="PANTHER" id="PTHR30519">
    <property type="entry name" value="5-METHYLTETRAHYDROPTEROYLTRIGLUTAMATE--HOMOCYSTEINE METHYLTRANSFERASE"/>
    <property type="match status" value="1"/>
</dbReference>
<dbReference type="Pfam" id="PF08267">
    <property type="entry name" value="Meth_synt_1"/>
    <property type="match status" value="1"/>
</dbReference>
<dbReference type="Pfam" id="PF01717">
    <property type="entry name" value="Meth_synt_2"/>
    <property type="match status" value="1"/>
</dbReference>
<dbReference type="PIRSF" id="PIRSF000382">
    <property type="entry name" value="MeTrfase_B12_ind"/>
    <property type="match status" value="1"/>
</dbReference>
<dbReference type="SUPFAM" id="SSF51726">
    <property type="entry name" value="UROD/MetE-like"/>
    <property type="match status" value="2"/>
</dbReference>
<comment type="function">
    <text evidence="1">Catalyzes the transfer of a methyl group from 5-methyltetrahydrofolate to homocysteine resulting in methionine formation.</text>
</comment>
<comment type="catalytic activity">
    <reaction evidence="1">
        <text>5-methyltetrahydropteroyltri-L-glutamate + L-homocysteine = tetrahydropteroyltri-L-glutamate + L-methionine</text>
        <dbReference type="Rhea" id="RHEA:21196"/>
        <dbReference type="ChEBI" id="CHEBI:57844"/>
        <dbReference type="ChEBI" id="CHEBI:58140"/>
        <dbReference type="ChEBI" id="CHEBI:58199"/>
        <dbReference type="ChEBI" id="CHEBI:58207"/>
        <dbReference type="EC" id="2.1.1.14"/>
    </reaction>
</comment>
<comment type="cofactor">
    <cofactor evidence="1">
        <name>Zn(2+)</name>
        <dbReference type="ChEBI" id="CHEBI:29105"/>
    </cofactor>
    <text evidence="1">Binds 1 zinc ion per subunit.</text>
</comment>
<comment type="pathway">
    <text evidence="1">Amino-acid biosynthesis; L-methionine biosynthesis via de novo pathway; L-methionine from L-homocysteine (MetE route): step 1/1.</text>
</comment>
<comment type="similarity">
    <text evidence="1">Belongs to the vitamin-B12 independent methionine synthase family.</text>
</comment>
<keyword id="KW-0028">Amino-acid biosynthesis</keyword>
<keyword id="KW-0479">Metal-binding</keyword>
<keyword id="KW-0486">Methionine biosynthesis</keyword>
<keyword id="KW-0489">Methyltransferase</keyword>
<keyword id="KW-1185">Reference proteome</keyword>
<keyword id="KW-0677">Repeat</keyword>
<keyword id="KW-0808">Transferase</keyword>
<keyword id="KW-0862">Zinc</keyword>
<protein>
    <recommendedName>
        <fullName evidence="1">5-methyltetrahydropteroyltriglutamate--homocysteine methyltransferase</fullName>
        <ecNumber evidence="1">2.1.1.14</ecNumber>
    </recommendedName>
    <alternativeName>
        <fullName evidence="1">Cobalamin-independent methionine synthase</fullName>
    </alternativeName>
    <alternativeName>
        <fullName evidence="1">Methionine synthase, vitamin-B12 independent isozyme</fullName>
    </alternativeName>
</protein>
<evidence type="ECO:0000255" key="1">
    <source>
        <dbReference type="HAMAP-Rule" id="MF_00172"/>
    </source>
</evidence>
<reference key="1">
    <citation type="journal article" date="2006" name="Appl. Environ. Microbiol.">
        <title>Genome sequence of the chemolithoautotrophic nitrite-oxidizing bacterium Nitrobacter winogradskyi Nb-255.</title>
        <authorList>
            <person name="Starkenburg S.R."/>
            <person name="Chain P.S.G."/>
            <person name="Sayavedra-Soto L.A."/>
            <person name="Hauser L."/>
            <person name="Land M.L."/>
            <person name="Larimer F.W."/>
            <person name="Malfatti S.A."/>
            <person name="Klotz M.G."/>
            <person name="Bottomley P.J."/>
            <person name="Arp D.J."/>
            <person name="Hickey W.J."/>
        </authorList>
    </citation>
    <scope>NUCLEOTIDE SEQUENCE [LARGE SCALE GENOMIC DNA]</scope>
    <source>
        <strain>ATCC 25391 / DSM 10237 / CIP 104748 / NCIMB 11846 / Nb-255</strain>
    </source>
</reference>
<name>METE_NITWN</name>